<reference key="1">
    <citation type="journal article" date="2005" name="Proc. Natl. Acad. Sci. U.S.A.">
        <title>Genome analysis of multiple pathogenic isolates of Streptococcus agalactiae: implications for the microbial 'pan-genome'.</title>
        <authorList>
            <person name="Tettelin H."/>
            <person name="Masignani V."/>
            <person name="Cieslewicz M.J."/>
            <person name="Donati C."/>
            <person name="Medini D."/>
            <person name="Ward N.L."/>
            <person name="Angiuoli S.V."/>
            <person name="Crabtree J."/>
            <person name="Jones A.L."/>
            <person name="Durkin A.S."/>
            <person name="DeBoy R.T."/>
            <person name="Davidsen T.M."/>
            <person name="Mora M."/>
            <person name="Scarselli M."/>
            <person name="Margarit y Ros I."/>
            <person name="Peterson J.D."/>
            <person name="Hauser C.R."/>
            <person name="Sundaram J.P."/>
            <person name="Nelson W.C."/>
            <person name="Madupu R."/>
            <person name="Brinkac L.M."/>
            <person name="Dodson R.J."/>
            <person name="Rosovitz M.J."/>
            <person name="Sullivan S.A."/>
            <person name="Daugherty S.C."/>
            <person name="Haft D.H."/>
            <person name="Selengut J."/>
            <person name="Gwinn M.L."/>
            <person name="Zhou L."/>
            <person name="Zafar N."/>
            <person name="Khouri H."/>
            <person name="Radune D."/>
            <person name="Dimitrov G."/>
            <person name="Watkins K."/>
            <person name="O'Connor K.J."/>
            <person name="Smith S."/>
            <person name="Utterback T.R."/>
            <person name="White O."/>
            <person name="Rubens C.E."/>
            <person name="Grandi G."/>
            <person name="Madoff L.C."/>
            <person name="Kasper D.L."/>
            <person name="Telford J.L."/>
            <person name="Wessels M.R."/>
            <person name="Rappuoli R."/>
            <person name="Fraser C.M."/>
        </authorList>
    </citation>
    <scope>NUCLEOTIDE SEQUENCE [LARGE SCALE GENOMIC DNA]</scope>
    <source>
        <strain>ATCC 27591 / A909 / CDC SS700</strain>
    </source>
</reference>
<keyword id="KW-0131">Cell cycle</keyword>
<keyword id="KW-0132">Cell division</keyword>
<keyword id="KW-0133">Cell shape</keyword>
<keyword id="KW-0961">Cell wall biogenesis/degradation</keyword>
<keyword id="KW-0963">Cytoplasm</keyword>
<keyword id="KW-0573">Peptidoglycan synthesis</keyword>
<keyword id="KW-0670">Pyruvate</keyword>
<keyword id="KW-0808">Transferase</keyword>
<protein>
    <recommendedName>
        <fullName evidence="1">UDP-N-acetylglucosamine 1-carboxyvinyltransferase 1</fullName>
        <ecNumber evidence="1">2.5.1.7</ecNumber>
    </recommendedName>
    <alternativeName>
        <fullName evidence="1">Enoylpyruvate transferase 1</fullName>
    </alternativeName>
    <alternativeName>
        <fullName evidence="1">UDP-N-acetylglucosamine enolpyruvyl transferase 1</fullName>
        <shortName evidence="1">EPT 1</shortName>
    </alternativeName>
</protein>
<comment type="function">
    <text evidence="1">Cell wall formation. Adds enolpyruvyl to UDP-N-acetylglucosamine.</text>
</comment>
<comment type="catalytic activity">
    <reaction evidence="1">
        <text>phosphoenolpyruvate + UDP-N-acetyl-alpha-D-glucosamine = UDP-N-acetyl-3-O-(1-carboxyvinyl)-alpha-D-glucosamine + phosphate</text>
        <dbReference type="Rhea" id="RHEA:18681"/>
        <dbReference type="ChEBI" id="CHEBI:43474"/>
        <dbReference type="ChEBI" id="CHEBI:57705"/>
        <dbReference type="ChEBI" id="CHEBI:58702"/>
        <dbReference type="ChEBI" id="CHEBI:68483"/>
        <dbReference type="EC" id="2.5.1.7"/>
    </reaction>
</comment>
<comment type="pathway">
    <text evidence="1">Cell wall biogenesis; peptidoglycan biosynthesis.</text>
</comment>
<comment type="subcellular location">
    <subcellularLocation>
        <location evidence="1">Cytoplasm</location>
    </subcellularLocation>
</comment>
<comment type="similarity">
    <text evidence="1">Belongs to the EPSP synthase family. MurA subfamily.</text>
</comment>
<name>MURA1_STRA1</name>
<proteinExistence type="inferred from homology"/>
<gene>
    <name evidence="1" type="primary">murA1</name>
    <name type="ordered locus">SAK_0966</name>
</gene>
<evidence type="ECO:0000255" key="1">
    <source>
        <dbReference type="HAMAP-Rule" id="MF_00111"/>
    </source>
</evidence>
<sequence>MRKIIINGGKQLTGEVAVSGAKNSVVALIPATILADDVVVLDGVPAISDVDSLVDIMETMGAKIKRYGETLEIDPCGVKDIPMPYGKINSLRASYYFYGSLLGRYGQATLGLPGGCDLGPRPIDLHLKAFEAMGASVSYEGDSMRLATNGKPLQGANIYMDTVSVGATINTIIAAAKANGRTVIENAAREPEIIDVATLLNNMGAHIRGAGTDVITIEGVKSLHGTRHQVIPDRIEAGTYIAMAAAIGRGIKVTNVLYEHLESFIAKLDEMGVRMTVEEDSIFVEEQERLKAVSIKTSPYPGFATDLQQPLTPLLLTAEGNGSLLDTIYEKRVNHVPELARMGANISTLGGKIVYSGPNQLSGAPVKATDLRAGAALVIAGLMAEGRTEITNIEFILRGYSNIIEKLTSLGADIQLVEE</sequence>
<organism>
    <name type="scientific">Streptococcus agalactiae serotype Ia (strain ATCC 27591 / A909 / CDC SS700)</name>
    <dbReference type="NCBI Taxonomy" id="205921"/>
    <lineage>
        <taxon>Bacteria</taxon>
        <taxon>Bacillati</taxon>
        <taxon>Bacillota</taxon>
        <taxon>Bacilli</taxon>
        <taxon>Lactobacillales</taxon>
        <taxon>Streptococcaceae</taxon>
        <taxon>Streptococcus</taxon>
    </lineage>
</organism>
<accession>Q3K1L5</accession>
<feature type="chain" id="PRO_0000231271" description="UDP-N-acetylglucosamine 1-carboxyvinyltransferase 1">
    <location>
        <begin position="1"/>
        <end position="419"/>
    </location>
</feature>
<feature type="active site" description="Proton donor" evidence="1">
    <location>
        <position position="116"/>
    </location>
</feature>
<feature type="binding site" evidence="1">
    <location>
        <begin position="22"/>
        <end position="23"/>
    </location>
    <ligand>
        <name>phosphoenolpyruvate</name>
        <dbReference type="ChEBI" id="CHEBI:58702"/>
    </ligand>
</feature>
<feature type="binding site" evidence="1">
    <location>
        <position position="92"/>
    </location>
    <ligand>
        <name>UDP-N-acetyl-alpha-D-glucosamine</name>
        <dbReference type="ChEBI" id="CHEBI:57705"/>
    </ligand>
</feature>
<feature type="binding site" evidence="1">
    <location>
        <begin position="121"/>
        <end position="125"/>
    </location>
    <ligand>
        <name>UDP-N-acetyl-alpha-D-glucosamine</name>
        <dbReference type="ChEBI" id="CHEBI:57705"/>
    </ligand>
</feature>
<feature type="binding site" evidence="1">
    <location>
        <position position="306"/>
    </location>
    <ligand>
        <name>UDP-N-acetyl-alpha-D-glucosamine</name>
        <dbReference type="ChEBI" id="CHEBI:57705"/>
    </ligand>
</feature>
<feature type="binding site" evidence="1">
    <location>
        <position position="328"/>
    </location>
    <ligand>
        <name>UDP-N-acetyl-alpha-D-glucosamine</name>
        <dbReference type="ChEBI" id="CHEBI:57705"/>
    </ligand>
</feature>
<feature type="modified residue" description="2-(S-cysteinyl)pyruvic acid O-phosphothioketal" evidence="1">
    <location>
        <position position="116"/>
    </location>
</feature>
<dbReference type="EC" id="2.5.1.7" evidence="1"/>
<dbReference type="EMBL" id="CP000114">
    <property type="protein sequence ID" value="ABA45498.1"/>
    <property type="molecule type" value="Genomic_DNA"/>
</dbReference>
<dbReference type="RefSeq" id="WP_001226242.1">
    <property type="nucleotide sequence ID" value="NC_007432.1"/>
</dbReference>
<dbReference type="SMR" id="Q3K1L5"/>
<dbReference type="KEGG" id="sak:SAK_0966"/>
<dbReference type="HOGENOM" id="CLU_027387_0_0_9"/>
<dbReference type="UniPathway" id="UPA00219"/>
<dbReference type="GO" id="GO:0005737">
    <property type="term" value="C:cytoplasm"/>
    <property type="evidence" value="ECO:0007669"/>
    <property type="project" value="UniProtKB-SubCell"/>
</dbReference>
<dbReference type="GO" id="GO:0008760">
    <property type="term" value="F:UDP-N-acetylglucosamine 1-carboxyvinyltransferase activity"/>
    <property type="evidence" value="ECO:0007669"/>
    <property type="project" value="UniProtKB-UniRule"/>
</dbReference>
<dbReference type="GO" id="GO:0051301">
    <property type="term" value="P:cell division"/>
    <property type="evidence" value="ECO:0007669"/>
    <property type="project" value="UniProtKB-KW"/>
</dbReference>
<dbReference type="GO" id="GO:0071555">
    <property type="term" value="P:cell wall organization"/>
    <property type="evidence" value="ECO:0007669"/>
    <property type="project" value="UniProtKB-KW"/>
</dbReference>
<dbReference type="GO" id="GO:0009252">
    <property type="term" value="P:peptidoglycan biosynthetic process"/>
    <property type="evidence" value="ECO:0007669"/>
    <property type="project" value="UniProtKB-UniRule"/>
</dbReference>
<dbReference type="GO" id="GO:0008360">
    <property type="term" value="P:regulation of cell shape"/>
    <property type="evidence" value="ECO:0007669"/>
    <property type="project" value="UniProtKB-KW"/>
</dbReference>
<dbReference type="GO" id="GO:0019277">
    <property type="term" value="P:UDP-N-acetylgalactosamine biosynthetic process"/>
    <property type="evidence" value="ECO:0007669"/>
    <property type="project" value="InterPro"/>
</dbReference>
<dbReference type="CDD" id="cd01555">
    <property type="entry name" value="UdpNAET"/>
    <property type="match status" value="1"/>
</dbReference>
<dbReference type="FunFam" id="3.65.10.10:FF:000001">
    <property type="entry name" value="UDP-N-acetylglucosamine 1-carboxyvinyltransferase"/>
    <property type="match status" value="1"/>
</dbReference>
<dbReference type="Gene3D" id="3.65.10.10">
    <property type="entry name" value="Enolpyruvate transferase domain"/>
    <property type="match status" value="2"/>
</dbReference>
<dbReference type="HAMAP" id="MF_00111">
    <property type="entry name" value="MurA"/>
    <property type="match status" value="1"/>
</dbReference>
<dbReference type="InterPro" id="IPR001986">
    <property type="entry name" value="Enolpyruvate_Tfrase_dom"/>
</dbReference>
<dbReference type="InterPro" id="IPR036968">
    <property type="entry name" value="Enolpyruvate_Tfrase_sf"/>
</dbReference>
<dbReference type="InterPro" id="IPR050068">
    <property type="entry name" value="MurA_subfamily"/>
</dbReference>
<dbReference type="InterPro" id="IPR013792">
    <property type="entry name" value="RNA3'P_cycl/enolpyr_Trfase_a/b"/>
</dbReference>
<dbReference type="InterPro" id="IPR005750">
    <property type="entry name" value="UDP_GlcNAc_COvinyl_MurA"/>
</dbReference>
<dbReference type="NCBIfam" id="TIGR01072">
    <property type="entry name" value="murA"/>
    <property type="match status" value="1"/>
</dbReference>
<dbReference type="NCBIfam" id="NF006873">
    <property type="entry name" value="PRK09369.1"/>
    <property type="match status" value="1"/>
</dbReference>
<dbReference type="NCBIfam" id="NF009470">
    <property type="entry name" value="PRK12830.1"/>
    <property type="match status" value="1"/>
</dbReference>
<dbReference type="PANTHER" id="PTHR43783">
    <property type="entry name" value="UDP-N-ACETYLGLUCOSAMINE 1-CARBOXYVINYLTRANSFERASE"/>
    <property type="match status" value="1"/>
</dbReference>
<dbReference type="PANTHER" id="PTHR43783:SF2">
    <property type="entry name" value="UDP-N-ACETYLGLUCOSAMINE 1-CARBOXYVINYLTRANSFERASE 2"/>
    <property type="match status" value="1"/>
</dbReference>
<dbReference type="Pfam" id="PF00275">
    <property type="entry name" value="EPSP_synthase"/>
    <property type="match status" value="1"/>
</dbReference>
<dbReference type="SUPFAM" id="SSF55205">
    <property type="entry name" value="EPT/RTPC-like"/>
    <property type="match status" value="1"/>
</dbReference>